<comment type="catalytic activity">
    <reaction evidence="3">
        <text>(2R,3R)-tartrate = oxaloacetate + H2O</text>
        <dbReference type="Rhea" id="RHEA:15413"/>
        <dbReference type="ChEBI" id="CHEBI:15377"/>
        <dbReference type="ChEBI" id="CHEBI:16452"/>
        <dbReference type="ChEBI" id="CHEBI:30924"/>
        <dbReference type="EC" id="4.2.1.32"/>
    </reaction>
</comment>
<comment type="subunit">
    <text evidence="5">Heterotetramer of two alpha and two beta subunits.</text>
</comment>
<comment type="induction">
    <text evidence="2">Induced by tartrate, via TtdR.</text>
</comment>
<comment type="similarity">
    <text evidence="4">Belongs to the class-I fumarase family.</text>
</comment>
<reference key="1">
    <citation type="journal article" date="1993" name="J. Gen. Microbiol.">
        <title>Identification of the L-tartrate dehydratase genes (ttdA and ttdB) of Escherichia coli and evolutionary relationship with the class I fumarase genes.</title>
        <authorList>
            <person name="Reaney S.K."/>
            <person name="Begg C."/>
            <person name="Bungard S.I."/>
            <person name="Guest J.R."/>
        </authorList>
    </citation>
    <scope>NUCLEOTIDE SEQUENCE [GENOMIC DNA]</scope>
    <scope>CATALYTIC ACTIVITY</scope>
    <scope>SUBUNIT</scope>
    <source>
        <strain>K12 / W3110 / ATCC 27325 / DSM 5911</strain>
    </source>
</reference>
<reference key="2">
    <citation type="journal article" date="1987" name="Gene">
        <title>Possible new genes as revealed by molecular analysis of a 5-kb Escherichia coli chromosomal region 5' to the rpsU-dnaG-rpoD macromolecular-synthesis operon.</title>
        <authorList>
            <person name="Nesin M."/>
            <person name="Lupski J.R."/>
            <person name="Svec P."/>
            <person name="Godson G.N."/>
        </authorList>
    </citation>
    <scope>NUCLEOTIDE SEQUENCE [GENOMIC DNA]</scope>
</reference>
<reference key="3">
    <citation type="journal article" date="1997" name="Science">
        <title>The complete genome sequence of Escherichia coli K-12.</title>
        <authorList>
            <person name="Blattner F.R."/>
            <person name="Plunkett G. III"/>
            <person name="Bloch C.A."/>
            <person name="Perna N.T."/>
            <person name="Burland V."/>
            <person name="Riley M."/>
            <person name="Collado-Vides J."/>
            <person name="Glasner J.D."/>
            <person name="Rode C.K."/>
            <person name="Mayhew G.F."/>
            <person name="Gregor J."/>
            <person name="Davis N.W."/>
            <person name="Kirkpatrick H.A."/>
            <person name="Goeden M.A."/>
            <person name="Rose D.J."/>
            <person name="Mau B."/>
            <person name="Shao Y."/>
        </authorList>
    </citation>
    <scope>NUCLEOTIDE SEQUENCE [LARGE SCALE GENOMIC DNA]</scope>
    <source>
        <strain>K12 / MG1655 / ATCC 47076</strain>
    </source>
</reference>
<reference key="4">
    <citation type="journal article" date="2006" name="Mol. Syst. Biol.">
        <title>Highly accurate genome sequences of Escherichia coli K-12 strains MG1655 and W3110.</title>
        <authorList>
            <person name="Hayashi K."/>
            <person name="Morooka N."/>
            <person name="Yamamoto Y."/>
            <person name="Fujita K."/>
            <person name="Isono K."/>
            <person name="Choi S."/>
            <person name="Ohtsubo E."/>
            <person name="Baba T."/>
            <person name="Wanner B.L."/>
            <person name="Mori H."/>
            <person name="Horiuchi T."/>
        </authorList>
    </citation>
    <scope>NUCLEOTIDE SEQUENCE [LARGE SCALE GENOMIC DNA]</scope>
    <source>
        <strain>K12 / W3110 / ATCC 27325 / DSM 5911</strain>
    </source>
</reference>
<reference key="5">
    <citation type="journal article" date="2006" name="Microbiology">
        <title>Functional identification of ygiP as a positive regulator of the ttdA-ttdB-ygjE operon.</title>
        <authorList>
            <person name="Oshima T."/>
            <person name="Biville F."/>
        </authorList>
    </citation>
    <scope>INDUCTION</scope>
</reference>
<keyword id="KW-0456">Lyase</keyword>
<keyword id="KW-1185">Reference proteome</keyword>
<sequence>MKKILTTPIKAEDLQDIRVGDVIYLTGTLVTCRDVCHRRLIELKRPIPYDLNGKAIFHAGPIVRKNGDKWEMVSVGPTTSMRMESFEREFIEQTGVKLVVGKGGMGPLTEEGCQKFKALHVIFPAGCAVLAATQVEEIEEVHWTELGMPESLWVCRVKEFGPLIVSIDTHGNNLIAENKKLFAERRDPIVEEICEHVHYIK</sequence>
<accession>P0AC35</accession>
<accession>P05851</accession>
<accession>P33131</accession>
<accession>Q2M9E3</accession>
<evidence type="ECO:0000255" key="1"/>
<evidence type="ECO:0000269" key="2">
    <source>
    </source>
</evidence>
<evidence type="ECO:0000269" key="3">
    <source>
    </source>
</evidence>
<evidence type="ECO:0000305" key="4"/>
<evidence type="ECO:0000305" key="5">
    <source>
    </source>
</evidence>
<gene>
    <name type="primary">ttdB</name>
    <name type="synonym">ygjB</name>
    <name type="ordered locus">b3062</name>
    <name type="ordered locus">JW3034</name>
</gene>
<dbReference type="EC" id="4.2.1.32"/>
<dbReference type="EMBL" id="L14781">
    <property type="protein sequence ID" value="AAA03062.1"/>
    <property type="molecule type" value="Unassigned_DNA"/>
</dbReference>
<dbReference type="EMBL" id="M16194">
    <property type="protein sequence ID" value="AAA72574.1"/>
    <property type="molecule type" value="Genomic_DNA"/>
</dbReference>
<dbReference type="EMBL" id="U28379">
    <property type="protein sequence ID" value="AAA89142.1"/>
    <property type="molecule type" value="Genomic_DNA"/>
</dbReference>
<dbReference type="EMBL" id="U00096">
    <property type="protein sequence ID" value="AAC76098.1"/>
    <property type="molecule type" value="Genomic_DNA"/>
</dbReference>
<dbReference type="EMBL" id="AP009048">
    <property type="protein sequence ID" value="BAE77113.1"/>
    <property type="molecule type" value="Genomic_DNA"/>
</dbReference>
<dbReference type="PIR" id="D65094">
    <property type="entry name" value="QQECRZ"/>
</dbReference>
<dbReference type="RefSeq" id="NP_417534.1">
    <property type="nucleotide sequence ID" value="NC_000913.3"/>
</dbReference>
<dbReference type="RefSeq" id="WP_000722957.1">
    <property type="nucleotide sequence ID" value="NZ_STEB01000001.1"/>
</dbReference>
<dbReference type="SMR" id="P0AC35"/>
<dbReference type="BioGRID" id="4261199">
    <property type="interactions" value="431"/>
</dbReference>
<dbReference type="ComplexPortal" id="CPX-5912">
    <property type="entry name" value="L-tartrate dehydratase complex"/>
</dbReference>
<dbReference type="FunCoup" id="P0AC35">
    <property type="interactions" value="66"/>
</dbReference>
<dbReference type="IntAct" id="P0AC35">
    <property type="interactions" value="2"/>
</dbReference>
<dbReference type="STRING" id="511145.b3062"/>
<dbReference type="PaxDb" id="511145-b3062"/>
<dbReference type="DNASU" id="947568"/>
<dbReference type="EnsemblBacteria" id="AAC76098">
    <property type="protein sequence ID" value="AAC76098"/>
    <property type="gene ID" value="b3062"/>
</dbReference>
<dbReference type="GeneID" id="86861212"/>
<dbReference type="GeneID" id="947568"/>
<dbReference type="KEGG" id="ecj:JW3034"/>
<dbReference type="KEGG" id="eco:b3062"/>
<dbReference type="KEGG" id="ecoc:C3026_16730"/>
<dbReference type="PATRIC" id="fig|511145.12.peg.3156"/>
<dbReference type="EchoBASE" id="EB1157"/>
<dbReference type="eggNOG" id="COG1838">
    <property type="taxonomic scope" value="Bacteria"/>
</dbReference>
<dbReference type="HOGENOM" id="CLU_098588_0_0_6"/>
<dbReference type="InParanoid" id="P0AC35"/>
<dbReference type="OMA" id="IYHCGPL"/>
<dbReference type="OrthoDB" id="9798978at2"/>
<dbReference type="PhylomeDB" id="P0AC35"/>
<dbReference type="BioCyc" id="EcoCyc:TTDB-MONOMER"/>
<dbReference type="BioCyc" id="MetaCyc:TTDB-MONOMER"/>
<dbReference type="PRO" id="PR:P0AC35"/>
<dbReference type="Proteomes" id="UP000000625">
    <property type="component" value="Chromosome"/>
</dbReference>
<dbReference type="GO" id="GO:1902494">
    <property type="term" value="C:catalytic complex"/>
    <property type="evidence" value="ECO:0000303"/>
    <property type="project" value="ComplexPortal"/>
</dbReference>
<dbReference type="GO" id="GO:0008730">
    <property type="term" value="F:L(+)-tartrate dehydratase activity"/>
    <property type="evidence" value="ECO:0007669"/>
    <property type="project" value="UniProtKB-EC"/>
</dbReference>
<dbReference type="GO" id="GO:0009408">
    <property type="term" value="P:response to heat"/>
    <property type="evidence" value="ECO:0000315"/>
    <property type="project" value="EcoCyc"/>
</dbReference>
<dbReference type="GO" id="GO:1901276">
    <property type="term" value="P:tartrate catabolic process"/>
    <property type="evidence" value="ECO:0000303"/>
    <property type="project" value="ComplexPortal"/>
</dbReference>
<dbReference type="FunFam" id="3.20.130.10:FF:000002">
    <property type="entry name" value="L(+)-tartrate dehydratase subunit beta"/>
    <property type="match status" value="1"/>
</dbReference>
<dbReference type="Gene3D" id="3.20.130.10">
    <property type="entry name" value="Fe-S hydro-lyase, tartrate dehydratase beta-type, catalytic domain"/>
    <property type="match status" value="1"/>
</dbReference>
<dbReference type="InterPro" id="IPR004647">
    <property type="entry name" value="Fe-S_hydro-lyase_TtdB-typ_cat"/>
</dbReference>
<dbReference type="InterPro" id="IPR036660">
    <property type="entry name" value="Fe-S_hydroAse_TtdB_cat_sf"/>
</dbReference>
<dbReference type="NCBIfam" id="NF006082">
    <property type="entry name" value="PRK08228.1"/>
    <property type="match status" value="1"/>
</dbReference>
<dbReference type="NCBIfam" id="TIGR00723">
    <property type="entry name" value="ttdB_fumA_fumB"/>
    <property type="match status" value="1"/>
</dbReference>
<dbReference type="PANTHER" id="PTHR43351">
    <property type="entry name" value="L(+)-TARTRATE DEHYDRATASE SUBUNIT BETA"/>
    <property type="match status" value="1"/>
</dbReference>
<dbReference type="PANTHER" id="PTHR43351:SF3">
    <property type="entry name" value="L(+)-TARTRATE DEHYDRATASE SUBUNIT BETA"/>
    <property type="match status" value="1"/>
</dbReference>
<dbReference type="Pfam" id="PF05683">
    <property type="entry name" value="Fumerase_C"/>
    <property type="match status" value="1"/>
</dbReference>
<dbReference type="SUPFAM" id="SSF117457">
    <property type="entry name" value="FumA C-terminal domain-like"/>
    <property type="match status" value="1"/>
</dbReference>
<organism>
    <name type="scientific">Escherichia coli (strain K12)</name>
    <dbReference type="NCBI Taxonomy" id="83333"/>
    <lineage>
        <taxon>Bacteria</taxon>
        <taxon>Pseudomonadati</taxon>
        <taxon>Pseudomonadota</taxon>
        <taxon>Gammaproteobacteria</taxon>
        <taxon>Enterobacterales</taxon>
        <taxon>Enterobacteriaceae</taxon>
        <taxon>Escherichia</taxon>
    </lineage>
</organism>
<protein>
    <recommendedName>
        <fullName>L(+)-tartrate dehydratase subunit beta</fullName>
        <shortName>L-TTD beta</shortName>
        <ecNumber>4.2.1.32</ecNumber>
    </recommendedName>
</protein>
<feature type="chain" id="PRO_0000195664" description="L(+)-tartrate dehydratase subunit beta">
    <location>
        <begin position="1"/>
        <end position="201"/>
    </location>
</feature>
<feature type="active site" evidence="1">
    <location>
        <position position="37"/>
    </location>
</feature>
<feature type="sequence conflict" description="In Ref. 1 and 2." evidence="4" ref="1 2">
    <original>SMRMES</original>
    <variation>QYAYGK</variation>
    <location>
        <begin position="80"/>
        <end position="85"/>
    </location>
</feature>
<feature type="sequence conflict" description="In Ref. 1 and 2." evidence="4" ref="1 2">
    <original>V</original>
    <variation>A</variation>
    <location>
        <position position="165"/>
    </location>
</feature>
<proteinExistence type="evidence at protein level"/>
<name>TTDB_ECOLI</name>